<feature type="chain" id="PRO_1000186537" description="Chorismate pyruvate-lyase">
    <location>
        <begin position="1"/>
        <end position="165"/>
    </location>
</feature>
<feature type="binding site" evidence="1">
    <location>
        <position position="35"/>
    </location>
    <ligand>
        <name>substrate</name>
    </ligand>
</feature>
<feature type="binding site" evidence="1">
    <location>
        <position position="77"/>
    </location>
    <ligand>
        <name>substrate</name>
    </ligand>
</feature>
<feature type="binding site" evidence="1">
    <location>
        <position position="115"/>
    </location>
    <ligand>
        <name>substrate</name>
    </ligand>
</feature>
<feature type="binding site" evidence="1">
    <location>
        <position position="156"/>
    </location>
    <ligand>
        <name>substrate</name>
    </ligand>
</feature>
<sequence>MSHPALTRLRALRYFDAIPALEPHLLDWLLLEDSMTKRFEQQGKRVSVTLIREAFVGQSEVEEASGLLPSESRYWLREILLCADGEPWLAGRTVVPESTLCGPEQVLQHLGKTPLGRYLFTSSTLTRDFIEIGRDATLWGRRSRLRLSGKPLLLTELFLPASPLY</sequence>
<name>UBIC_SALPC</name>
<gene>
    <name evidence="1" type="primary">ubiC</name>
    <name type="ordered locus">SPC_4294</name>
</gene>
<comment type="function">
    <text evidence="1">Removes the pyruvyl group from chorismate, with concomitant aromatization of the ring, to provide 4-hydroxybenzoate (4HB) for the ubiquinone pathway.</text>
</comment>
<comment type="catalytic activity">
    <reaction evidence="1">
        <text>chorismate = 4-hydroxybenzoate + pyruvate</text>
        <dbReference type="Rhea" id="RHEA:16505"/>
        <dbReference type="ChEBI" id="CHEBI:15361"/>
        <dbReference type="ChEBI" id="CHEBI:17879"/>
        <dbReference type="ChEBI" id="CHEBI:29748"/>
        <dbReference type="EC" id="4.1.3.40"/>
    </reaction>
</comment>
<comment type="pathway">
    <text evidence="1">Cofactor biosynthesis; ubiquinone biosynthesis.</text>
</comment>
<comment type="subunit">
    <text evidence="1">Monomer.</text>
</comment>
<comment type="subcellular location">
    <subcellularLocation>
        <location evidence="1">Cytoplasm</location>
    </subcellularLocation>
</comment>
<comment type="similarity">
    <text evidence="1">Belongs to the UbiC family.</text>
</comment>
<organism>
    <name type="scientific">Salmonella paratyphi C (strain RKS4594)</name>
    <dbReference type="NCBI Taxonomy" id="476213"/>
    <lineage>
        <taxon>Bacteria</taxon>
        <taxon>Pseudomonadati</taxon>
        <taxon>Pseudomonadota</taxon>
        <taxon>Gammaproteobacteria</taxon>
        <taxon>Enterobacterales</taxon>
        <taxon>Enterobacteriaceae</taxon>
        <taxon>Salmonella</taxon>
    </lineage>
</organism>
<keyword id="KW-0963">Cytoplasm</keyword>
<keyword id="KW-0456">Lyase</keyword>
<keyword id="KW-0670">Pyruvate</keyword>
<keyword id="KW-0831">Ubiquinone biosynthesis</keyword>
<protein>
    <recommendedName>
        <fullName evidence="1">Chorismate pyruvate-lyase</fullName>
        <shortName evidence="1">CL</shortName>
        <shortName evidence="1">CPL</shortName>
        <ecNumber evidence="1">4.1.3.40</ecNumber>
    </recommendedName>
</protein>
<evidence type="ECO:0000255" key="1">
    <source>
        <dbReference type="HAMAP-Rule" id="MF_01632"/>
    </source>
</evidence>
<dbReference type="EC" id="4.1.3.40" evidence="1"/>
<dbReference type="EMBL" id="CP000857">
    <property type="protein sequence ID" value="ACN48357.1"/>
    <property type="molecule type" value="Genomic_DNA"/>
</dbReference>
<dbReference type="RefSeq" id="WP_000019230.1">
    <property type="nucleotide sequence ID" value="NC_012125.1"/>
</dbReference>
<dbReference type="SMR" id="C0Q4D8"/>
<dbReference type="KEGG" id="sei:SPC_4294"/>
<dbReference type="HOGENOM" id="CLU_096824_1_0_6"/>
<dbReference type="UniPathway" id="UPA00232"/>
<dbReference type="Proteomes" id="UP000001599">
    <property type="component" value="Chromosome"/>
</dbReference>
<dbReference type="GO" id="GO:0005829">
    <property type="term" value="C:cytosol"/>
    <property type="evidence" value="ECO:0007669"/>
    <property type="project" value="TreeGrafter"/>
</dbReference>
<dbReference type="GO" id="GO:0008813">
    <property type="term" value="F:chorismate lyase activity"/>
    <property type="evidence" value="ECO:0007669"/>
    <property type="project" value="UniProtKB-UniRule"/>
</dbReference>
<dbReference type="GO" id="GO:0042866">
    <property type="term" value="P:pyruvate biosynthetic process"/>
    <property type="evidence" value="ECO:0007669"/>
    <property type="project" value="UniProtKB-UniRule"/>
</dbReference>
<dbReference type="GO" id="GO:0006744">
    <property type="term" value="P:ubiquinone biosynthetic process"/>
    <property type="evidence" value="ECO:0007669"/>
    <property type="project" value="UniProtKB-UniRule"/>
</dbReference>
<dbReference type="FunFam" id="3.40.1410.10:FF:000002">
    <property type="entry name" value="Chorismate pyruvate-lyase"/>
    <property type="match status" value="1"/>
</dbReference>
<dbReference type="Gene3D" id="3.40.1410.10">
    <property type="entry name" value="Chorismate lyase-like"/>
    <property type="match status" value="1"/>
</dbReference>
<dbReference type="HAMAP" id="MF_01632">
    <property type="entry name" value="UbiC"/>
    <property type="match status" value="1"/>
</dbReference>
<dbReference type="InterPro" id="IPR007440">
    <property type="entry name" value="Chorismate--pyruvate_lyase"/>
</dbReference>
<dbReference type="InterPro" id="IPR028978">
    <property type="entry name" value="Chorismate_lyase_/UTRA_dom_sf"/>
</dbReference>
<dbReference type="NCBIfam" id="NF008656">
    <property type="entry name" value="PRK11655.1"/>
    <property type="match status" value="1"/>
</dbReference>
<dbReference type="PANTHER" id="PTHR38683">
    <property type="entry name" value="CHORISMATE PYRUVATE-LYASE"/>
    <property type="match status" value="1"/>
</dbReference>
<dbReference type="PANTHER" id="PTHR38683:SF1">
    <property type="entry name" value="CHORISMATE PYRUVATE-LYASE"/>
    <property type="match status" value="1"/>
</dbReference>
<dbReference type="Pfam" id="PF04345">
    <property type="entry name" value="Chor_lyase"/>
    <property type="match status" value="1"/>
</dbReference>
<dbReference type="SUPFAM" id="SSF64288">
    <property type="entry name" value="Chorismate lyase-like"/>
    <property type="match status" value="1"/>
</dbReference>
<reference key="1">
    <citation type="journal article" date="2009" name="PLoS ONE">
        <title>Salmonella paratyphi C: genetic divergence from Salmonella choleraesuis and pathogenic convergence with Salmonella typhi.</title>
        <authorList>
            <person name="Liu W.-Q."/>
            <person name="Feng Y."/>
            <person name="Wang Y."/>
            <person name="Zou Q.-H."/>
            <person name="Chen F."/>
            <person name="Guo J.-T."/>
            <person name="Peng Y.-H."/>
            <person name="Jin Y."/>
            <person name="Li Y.-G."/>
            <person name="Hu S.-N."/>
            <person name="Johnston R.N."/>
            <person name="Liu G.-R."/>
            <person name="Liu S.-L."/>
        </authorList>
    </citation>
    <scope>NUCLEOTIDE SEQUENCE [LARGE SCALE GENOMIC DNA]</scope>
    <source>
        <strain>RKS4594</strain>
    </source>
</reference>
<accession>C0Q4D8</accession>
<proteinExistence type="inferred from homology"/>